<keyword id="KW-0028">Amino-acid biosynthesis</keyword>
<keyword id="KW-0067">ATP-binding</keyword>
<keyword id="KW-0418">Kinase</keyword>
<keyword id="KW-0460">Magnesium</keyword>
<keyword id="KW-0547">Nucleotide-binding</keyword>
<keyword id="KW-0641">Proline biosynthesis</keyword>
<keyword id="KW-0808">Transferase</keyword>
<accession>A0A0R6Y3I5</accession>
<sequence>MADILKSVKRIVVKVGSSILVDNQEIAAHRIEALCQFIADLQTKYEVILVTSGAVAAGYTKKEMDKSYVPNKQALASMGQPLLMHMYYTELQKHGILCAQMLLAAYDLDSRKRTINAHNTIEVLISHKVIPIINENDATALEELVFGDNDRLSALVAHHFKANLLVILSDIDGYYTENPRTSTNATIRSVVHELSPDDLVAEATPNNRFATGGIVTKLQAAQFLLERGGKMYLSSGFHLEKARQFLLGGSHEIGTLFYSRVSS</sequence>
<dbReference type="EC" id="2.7.2.11" evidence="2"/>
<dbReference type="EMBL" id="KM411797">
    <property type="protein sequence ID" value="AKK31242.1"/>
    <property type="molecule type" value="Genomic_DNA"/>
</dbReference>
<dbReference type="SMR" id="A0A0R6Y3I5"/>
<dbReference type="VEuPathDB" id="TriTrypDB:LdBPK_262740.1"/>
<dbReference type="VEuPathDB" id="TriTrypDB:LdCL_260033500"/>
<dbReference type="VEuPathDB" id="TriTrypDB:LDHU3_26.3600"/>
<dbReference type="BRENDA" id="2.7.2.11">
    <property type="organism ID" value="2947"/>
</dbReference>
<dbReference type="SABIO-RK" id="A0A0R6Y3I5"/>
<dbReference type="UniPathway" id="UPA00098">
    <property type="reaction ID" value="UER00359"/>
</dbReference>
<dbReference type="GO" id="GO:0005829">
    <property type="term" value="C:cytosol"/>
    <property type="evidence" value="ECO:0007669"/>
    <property type="project" value="TreeGrafter"/>
</dbReference>
<dbReference type="GO" id="GO:0005524">
    <property type="term" value="F:ATP binding"/>
    <property type="evidence" value="ECO:0007669"/>
    <property type="project" value="UniProtKB-KW"/>
</dbReference>
<dbReference type="GO" id="GO:0004349">
    <property type="term" value="F:glutamate 5-kinase activity"/>
    <property type="evidence" value="ECO:0000314"/>
    <property type="project" value="UniProtKB"/>
</dbReference>
<dbReference type="GO" id="GO:0042802">
    <property type="term" value="F:identical protein binding"/>
    <property type="evidence" value="ECO:0000314"/>
    <property type="project" value="UniProtKB"/>
</dbReference>
<dbReference type="GO" id="GO:0055129">
    <property type="term" value="P:L-proline biosynthetic process"/>
    <property type="evidence" value="ECO:0000314"/>
    <property type="project" value="UniProtKB"/>
</dbReference>
<dbReference type="CDD" id="cd04242">
    <property type="entry name" value="AAK_G5K_ProB"/>
    <property type="match status" value="1"/>
</dbReference>
<dbReference type="FunFam" id="3.40.1160.10:FF:000057">
    <property type="entry name" value="Glutamate 5-kinase, putative"/>
    <property type="match status" value="1"/>
</dbReference>
<dbReference type="Gene3D" id="3.40.1160.10">
    <property type="entry name" value="Acetylglutamate kinase-like"/>
    <property type="match status" value="1"/>
</dbReference>
<dbReference type="HAMAP" id="MF_00456">
    <property type="entry name" value="ProB"/>
    <property type="match status" value="1"/>
</dbReference>
<dbReference type="InterPro" id="IPR036393">
    <property type="entry name" value="AceGlu_kinase-like_sf"/>
</dbReference>
<dbReference type="InterPro" id="IPR001048">
    <property type="entry name" value="Asp/Glu/Uridylate_kinase"/>
</dbReference>
<dbReference type="InterPro" id="IPR041739">
    <property type="entry name" value="G5K_ProB"/>
</dbReference>
<dbReference type="InterPro" id="IPR001057">
    <property type="entry name" value="Glu/AcGlu_kinase"/>
</dbReference>
<dbReference type="InterPro" id="IPR011529">
    <property type="entry name" value="Glu_5kinase"/>
</dbReference>
<dbReference type="InterPro" id="IPR005715">
    <property type="entry name" value="Glu_5kinase/COase_Synthase"/>
</dbReference>
<dbReference type="InterPro" id="IPR019797">
    <property type="entry name" value="Glutamate_5-kinase_CS"/>
</dbReference>
<dbReference type="NCBIfam" id="TIGR01027">
    <property type="entry name" value="proB"/>
    <property type="match status" value="1"/>
</dbReference>
<dbReference type="PANTHER" id="PTHR43654">
    <property type="entry name" value="GLUTAMATE 5-KINASE"/>
    <property type="match status" value="1"/>
</dbReference>
<dbReference type="PANTHER" id="PTHR43654:SF3">
    <property type="entry name" value="GLUTAMATE 5-KINASE"/>
    <property type="match status" value="1"/>
</dbReference>
<dbReference type="Pfam" id="PF00696">
    <property type="entry name" value="AA_kinase"/>
    <property type="match status" value="1"/>
</dbReference>
<dbReference type="PIRSF" id="PIRSF000729">
    <property type="entry name" value="GK"/>
    <property type="match status" value="1"/>
</dbReference>
<dbReference type="PRINTS" id="PR00474">
    <property type="entry name" value="GLU5KINASE"/>
</dbReference>
<dbReference type="SUPFAM" id="SSF53633">
    <property type="entry name" value="Carbamate kinase-like"/>
    <property type="match status" value="1"/>
</dbReference>
<dbReference type="PROSITE" id="PS00902">
    <property type="entry name" value="GLUTAMATE_5_KINASE"/>
    <property type="match status" value="1"/>
</dbReference>
<reference evidence="5" key="1">
    <citation type="journal article" date="2016" name="PLoS Negl. Trop. Dis.">
        <title>The Dynamics of Lateral Gene Transfer in Genus Leishmania - A Route for Adaptation and Species Diversification.</title>
        <authorList>
            <person name="Vikeved E."/>
            <person name="Backlund A."/>
            <person name="Alsmark C."/>
        </authorList>
    </citation>
    <scope>NUCLEOTIDE SEQUENCE [GENOMIC DNA]</scope>
    <source>
        <strain evidence="5">MHOM/ET/67/HU3 / LV9</strain>
    </source>
</reference>
<reference evidence="4" key="2">
    <citation type="journal article" date="2018" name="FEBS J.">
        <title>Characterisation of a putative glutamate 5-kinase from Leishmania donovani.</title>
        <authorList>
            <person name="Sienkiewicz N."/>
            <person name="Ong H.B."/>
            <person name="Fairlamb A.H."/>
        </authorList>
    </citation>
    <scope>FUNCTION</scope>
    <scope>CATALYTIC ACTIVITY</scope>
    <scope>ACTIVITY REGULATION</scope>
    <scope>BIOPHYSICOCHEMICAL PROPERTIES</scope>
    <scope>PATHWAY</scope>
    <scope>COFACTOR</scope>
    <scope>SUBUNIT</scope>
    <scope>DEVELOPMENTAL STAGE</scope>
    <source>
        <strain evidence="3">MHOM/SD/62/1S-CL2D</strain>
    </source>
</reference>
<organism evidence="5">
    <name type="scientific">Leishmania donovani</name>
    <dbReference type="NCBI Taxonomy" id="5661"/>
    <lineage>
        <taxon>Eukaryota</taxon>
        <taxon>Discoba</taxon>
        <taxon>Euglenozoa</taxon>
        <taxon>Kinetoplastea</taxon>
        <taxon>Metakinetoplastina</taxon>
        <taxon>Trypanosomatida</taxon>
        <taxon>Trypanosomatidae</taxon>
        <taxon>Leishmaniinae</taxon>
        <taxon>Leishmania</taxon>
    </lineage>
</organism>
<gene>
    <name evidence="3" type="primary">G5K</name>
</gene>
<feature type="chain" id="PRO_0000448586" description="Glutamate 5-kinase">
    <location>
        <begin position="1"/>
        <end position="263"/>
    </location>
</feature>
<feature type="binding site" evidence="1">
    <location>
        <position position="14"/>
    </location>
    <ligand>
        <name>ATP</name>
        <dbReference type="ChEBI" id="CHEBI:30616"/>
    </ligand>
</feature>
<feature type="binding site" evidence="1">
    <location>
        <position position="52"/>
    </location>
    <ligand>
        <name>substrate</name>
    </ligand>
</feature>
<feature type="binding site" evidence="1">
    <location>
        <position position="137"/>
    </location>
    <ligand>
        <name>substrate</name>
    </ligand>
</feature>
<feature type="binding site" evidence="1">
    <location>
        <position position="149"/>
    </location>
    <ligand>
        <name>substrate</name>
    </ligand>
</feature>
<feature type="binding site" evidence="1">
    <location>
        <begin position="169"/>
        <end position="170"/>
    </location>
    <ligand>
        <name>ATP</name>
        <dbReference type="ChEBI" id="CHEBI:30616"/>
    </ligand>
</feature>
<feature type="binding site" evidence="1">
    <location>
        <begin position="211"/>
        <end position="217"/>
    </location>
    <ligand>
        <name>ATP</name>
        <dbReference type="ChEBI" id="CHEBI:30616"/>
    </ligand>
</feature>
<proteinExistence type="evidence at protein level"/>
<name>G5K_LEIDO</name>
<protein>
    <recommendedName>
        <fullName evidence="3">Glutamate 5-kinase</fullName>
        <shortName evidence="3">LdG5K</shortName>
        <ecNumber evidence="2">2.7.2.11</ecNumber>
    </recommendedName>
    <alternativeName>
        <fullName evidence="4">Gamma-glutamyl kinase</fullName>
    </alternativeName>
</protein>
<evidence type="ECO:0000250" key="1">
    <source>
        <dbReference type="UniProtKB" id="P0A7B5"/>
    </source>
</evidence>
<evidence type="ECO:0000269" key="2">
    <source>
    </source>
</evidence>
<evidence type="ECO:0000303" key="3">
    <source>
    </source>
</evidence>
<evidence type="ECO:0000305" key="4"/>
<evidence type="ECO:0000312" key="5">
    <source>
        <dbReference type="EMBL" id="AKK31242.1"/>
    </source>
</evidence>
<comment type="function">
    <text evidence="2">Catalyzes the transfer of a phosphate group to glutamate to form L-glutamate 5-phosphate (PubMed:29777624). May be important for growth and survival (PubMed:29777624).</text>
</comment>
<comment type="catalytic activity">
    <reaction evidence="2">
        <text>L-glutamate + ATP = L-glutamyl 5-phosphate + ADP</text>
        <dbReference type="Rhea" id="RHEA:14877"/>
        <dbReference type="ChEBI" id="CHEBI:29985"/>
        <dbReference type="ChEBI" id="CHEBI:30616"/>
        <dbReference type="ChEBI" id="CHEBI:58274"/>
        <dbReference type="ChEBI" id="CHEBI:456216"/>
        <dbReference type="EC" id="2.7.2.11"/>
    </reaction>
    <physiologicalReaction direction="left-to-right" evidence="2">
        <dbReference type="Rhea" id="RHEA:14878"/>
    </physiologicalReaction>
</comment>
<comment type="cofactor">
    <cofactor evidence="2">
        <name>Mg(2+)</name>
        <dbReference type="ChEBI" id="CHEBI:18420"/>
    </cofactor>
</comment>
<comment type="activity regulation">
    <text evidence="2">Inhibited by L-proline as part of a negative feedback loop. Also inhibited by L-proline analogs 3,4-dehydro-L-proline, L-azetidine-2-carboxylic acid and L-4-thiazolidine carboxylic acid.</text>
</comment>
<comment type="biophysicochemical properties">
    <kinetics>
        <KM evidence="2">10 mM for L-glutamate</KM>
        <KM evidence="2">0.6 mM for ATP</KM>
    </kinetics>
</comment>
<comment type="pathway">
    <text evidence="2">Amino-acid biosynthesis; L-proline biosynthesis; L-glutamate 5-semialdehyde from L-glutamate: step 1/2.</text>
</comment>
<comment type="subunit">
    <text evidence="2">Homotetramer; oligomerization is not affected by L-proline feedback inhibition.</text>
</comment>
<comment type="developmental stage">
    <text evidence="2">Expressed in promastigotes.</text>
</comment>
<comment type="similarity">
    <text evidence="4">Belongs to the glutamate 5-kinase family.</text>
</comment>